<evidence type="ECO:0000255" key="1">
    <source>
        <dbReference type="PROSITE-ProRule" id="PRU00274"/>
    </source>
</evidence>
<evidence type="ECO:0000305" key="2"/>
<name>K1KB5_MOUSE</name>
<protein>
    <recommendedName>
        <fullName>Kallikrein 1-related peptidase b5</fullName>
        <ecNumber>3.4.21.35</ecNumber>
    </recommendedName>
    <alternativeName>
        <fullName>Glandular kallikrein K5</fullName>
        <shortName>mGK-5</shortName>
    </alternativeName>
    <alternativeName>
        <fullName>Tissue kallikrein-5</fullName>
    </alternativeName>
</protein>
<dbReference type="EC" id="3.4.21.35"/>
<dbReference type="EMBL" id="Y00500">
    <property type="protein sequence ID" value="CAA68553.1"/>
    <property type="molecule type" value="Genomic_DNA"/>
</dbReference>
<dbReference type="EMBL" id="BC013659">
    <property type="protein sequence ID" value="AAH13659.1"/>
    <property type="molecule type" value="mRNA"/>
</dbReference>
<dbReference type="EMBL" id="BC094281">
    <property type="protein sequence ID" value="AAH94281.1"/>
    <property type="molecule type" value="mRNA"/>
</dbReference>
<dbReference type="EMBL" id="M18584">
    <property type="protein sequence ID" value="AAX76511.1"/>
    <property type="molecule type" value="Genomic_DNA"/>
</dbReference>
<dbReference type="EMBL" id="M18604">
    <property type="protein sequence ID" value="AAD15284.3"/>
    <property type="molecule type" value="Genomic_DNA"/>
</dbReference>
<dbReference type="CCDS" id="CCDS21201.1"/>
<dbReference type="PIR" id="S06305">
    <property type="entry name" value="TRMSM5"/>
</dbReference>
<dbReference type="RefSeq" id="NP_032482.1">
    <property type="nucleotide sequence ID" value="NM_008456.4"/>
</dbReference>
<dbReference type="SMR" id="P15945"/>
<dbReference type="FunCoup" id="P15945">
    <property type="interactions" value="77"/>
</dbReference>
<dbReference type="STRING" id="10090.ENSMUSP00000073964"/>
<dbReference type="BindingDB" id="P15945"/>
<dbReference type="ChEMBL" id="CHEMBL5169118"/>
<dbReference type="MEROPS" id="S01.037"/>
<dbReference type="GlyCosmos" id="P15945">
    <property type="glycosylation" value="1 site, No reported glycans"/>
</dbReference>
<dbReference type="GlyGen" id="P15945">
    <property type="glycosylation" value="1 site"/>
</dbReference>
<dbReference type="iPTMnet" id="P15945"/>
<dbReference type="PhosphoSitePlus" id="P15945"/>
<dbReference type="CPTAC" id="non-CPTAC-3468"/>
<dbReference type="PaxDb" id="10090-ENSMUSP00000073964"/>
<dbReference type="PeptideAtlas" id="P15945"/>
<dbReference type="ProteomicsDB" id="269444"/>
<dbReference type="DNASU" id="16622"/>
<dbReference type="Ensembl" id="ENSMUST00000074359.4">
    <property type="protein sequence ID" value="ENSMUSP00000073964.3"/>
    <property type="gene ID" value="ENSMUSG00000066512.4"/>
</dbReference>
<dbReference type="GeneID" id="16622"/>
<dbReference type="KEGG" id="mmu:16622"/>
<dbReference type="UCSC" id="uc009gon.1">
    <property type="organism name" value="mouse"/>
</dbReference>
<dbReference type="AGR" id="MGI:892020"/>
<dbReference type="CTD" id="16622"/>
<dbReference type="MGI" id="MGI:892020">
    <property type="gene designation" value="Klk1b5"/>
</dbReference>
<dbReference type="VEuPathDB" id="HostDB:ENSMUSG00000066512"/>
<dbReference type="eggNOG" id="KOG3627">
    <property type="taxonomic scope" value="Eukaryota"/>
</dbReference>
<dbReference type="GeneTree" id="ENSGT01020000230389"/>
<dbReference type="HOGENOM" id="CLU_006842_1_1_1"/>
<dbReference type="InParanoid" id="P15945"/>
<dbReference type="OMA" id="ERTMADN"/>
<dbReference type="OrthoDB" id="10061449at2759"/>
<dbReference type="PhylomeDB" id="P15945"/>
<dbReference type="TreeFam" id="TF331065"/>
<dbReference type="BRENDA" id="3.4.21.B39">
    <property type="organism ID" value="3474"/>
</dbReference>
<dbReference type="Reactome" id="R-MMU-1592389">
    <property type="pathway name" value="Activation of Matrix Metalloproteinases"/>
</dbReference>
<dbReference type="BioGRID-ORCS" id="16622">
    <property type="hits" value="4 hits in 48 CRISPR screens"/>
</dbReference>
<dbReference type="ChiTaRS" id="Klk1b5">
    <property type="organism name" value="mouse"/>
</dbReference>
<dbReference type="PRO" id="PR:P15945"/>
<dbReference type="Proteomes" id="UP000000589">
    <property type="component" value="Chromosome 7"/>
</dbReference>
<dbReference type="RNAct" id="P15945">
    <property type="molecule type" value="protein"/>
</dbReference>
<dbReference type="Bgee" id="ENSMUSG00000066512">
    <property type="expression patterns" value="Expressed in submandibular gland and 21 other cell types or tissues"/>
</dbReference>
<dbReference type="GO" id="GO:0004252">
    <property type="term" value="F:serine-type endopeptidase activity"/>
    <property type="evidence" value="ECO:0000314"/>
    <property type="project" value="MGI"/>
</dbReference>
<dbReference type="GO" id="GO:0006508">
    <property type="term" value="P:proteolysis"/>
    <property type="evidence" value="ECO:0000314"/>
    <property type="project" value="MGI"/>
</dbReference>
<dbReference type="CDD" id="cd00190">
    <property type="entry name" value="Tryp_SPc"/>
    <property type="match status" value="1"/>
</dbReference>
<dbReference type="FunFam" id="2.40.10.10:FF:000032">
    <property type="entry name" value="Kallikrein 1-related peptidase C9"/>
    <property type="match status" value="1"/>
</dbReference>
<dbReference type="FunFam" id="2.40.10.10:FF:000042">
    <property type="entry name" value="Kallikrein 1-related peptidase C9"/>
    <property type="match status" value="1"/>
</dbReference>
<dbReference type="Gene3D" id="2.40.10.10">
    <property type="entry name" value="Trypsin-like serine proteases"/>
    <property type="match status" value="2"/>
</dbReference>
<dbReference type="InterPro" id="IPR009003">
    <property type="entry name" value="Peptidase_S1_PA"/>
</dbReference>
<dbReference type="InterPro" id="IPR043504">
    <property type="entry name" value="Peptidase_S1_PA_chymotrypsin"/>
</dbReference>
<dbReference type="InterPro" id="IPR001314">
    <property type="entry name" value="Peptidase_S1A"/>
</dbReference>
<dbReference type="InterPro" id="IPR001254">
    <property type="entry name" value="Trypsin_dom"/>
</dbReference>
<dbReference type="InterPro" id="IPR018114">
    <property type="entry name" value="TRYPSIN_HIS"/>
</dbReference>
<dbReference type="InterPro" id="IPR033116">
    <property type="entry name" value="TRYPSIN_SER"/>
</dbReference>
<dbReference type="PANTHER" id="PTHR24271:SF47">
    <property type="entry name" value="KALLIKREIN-1"/>
    <property type="match status" value="1"/>
</dbReference>
<dbReference type="PANTHER" id="PTHR24271">
    <property type="entry name" value="KALLIKREIN-RELATED"/>
    <property type="match status" value="1"/>
</dbReference>
<dbReference type="Pfam" id="PF00089">
    <property type="entry name" value="Trypsin"/>
    <property type="match status" value="1"/>
</dbReference>
<dbReference type="PRINTS" id="PR00722">
    <property type="entry name" value="CHYMOTRYPSIN"/>
</dbReference>
<dbReference type="SMART" id="SM00020">
    <property type="entry name" value="Tryp_SPc"/>
    <property type="match status" value="1"/>
</dbReference>
<dbReference type="SUPFAM" id="SSF50494">
    <property type="entry name" value="Trypsin-like serine proteases"/>
    <property type="match status" value="1"/>
</dbReference>
<dbReference type="PROSITE" id="PS50240">
    <property type="entry name" value="TRYPSIN_DOM"/>
    <property type="match status" value="1"/>
</dbReference>
<dbReference type="PROSITE" id="PS00134">
    <property type="entry name" value="TRYPSIN_HIS"/>
    <property type="match status" value="1"/>
</dbReference>
<dbReference type="PROSITE" id="PS00135">
    <property type="entry name" value="TRYPSIN_SER"/>
    <property type="match status" value="1"/>
</dbReference>
<keyword id="KW-1015">Disulfide bond</keyword>
<keyword id="KW-0325">Glycoprotein</keyword>
<keyword id="KW-0378">Hydrolase</keyword>
<keyword id="KW-0645">Protease</keyword>
<keyword id="KW-1185">Reference proteome</keyword>
<keyword id="KW-0720">Serine protease</keyword>
<keyword id="KW-0732">Signal</keyword>
<keyword id="KW-0865">Zymogen</keyword>
<sequence>MWFLILFLALSLGGIDAAPPVQSRIFGGFNCEKNSQPWQVAVYRFTKYQCGGVLLNANWVLTAAHCHNDKYQVWLGKNNFFEDEPSAQHRLVSKAIPHPDFNMSLLNEHTPQPEDDYSNDLMLLRLKKPADITDVVKPIDLPTEEPKLGSTCLASGWGSITPVIYEPADDLQCVNFKLLPNEDCVKAHIEKVTDVMLCAGDMDGGKDTCMGDSGGPLICDGVLHGITSWGPSPCGKPNVPGIYTKLIKFNSWIKDTIAKNA</sequence>
<accession>P15945</accession>
<accession>Q52KM1</accession>
<accession>Q565D7</accession>
<feature type="signal peptide" evidence="2">
    <location>
        <begin position="1"/>
        <end position="18"/>
    </location>
</feature>
<feature type="propeptide" id="PRO_0000027973" description="Activation peptide" evidence="2">
    <location>
        <begin position="19"/>
        <end position="24"/>
    </location>
</feature>
<feature type="chain" id="PRO_0000027974" description="Kallikrein 1-related peptidase b5">
    <location>
        <begin position="25"/>
        <end position="261"/>
    </location>
</feature>
<feature type="domain" description="Peptidase S1" evidence="1">
    <location>
        <begin position="25"/>
        <end position="258"/>
    </location>
</feature>
<feature type="active site" description="Charge relay system">
    <location>
        <position position="65"/>
    </location>
</feature>
<feature type="active site" description="Charge relay system">
    <location>
        <position position="120"/>
    </location>
</feature>
<feature type="active site" description="Charge relay system">
    <location>
        <position position="213"/>
    </location>
</feature>
<feature type="glycosylation site" description="N-linked (GlcNAc...) asparagine" evidence="2">
    <location>
        <position position="102"/>
    </location>
</feature>
<feature type="disulfide bond" evidence="1">
    <location>
        <begin position="31"/>
        <end position="173"/>
    </location>
</feature>
<feature type="disulfide bond" evidence="1">
    <location>
        <begin position="50"/>
        <end position="66"/>
    </location>
</feature>
<feature type="disulfide bond" evidence="1">
    <location>
        <begin position="152"/>
        <end position="219"/>
    </location>
</feature>
<feature type="disulfide bond" evidence="1">
    <location>
        <begin position="184"/>
        <end position="198"/>
    </location>
</feature>
<feature type="disulfide bond" evidence="1">
    <location>
        <begin position="209"/>
        <end position="234"/>
    </location>
</feature>
<reference key="1">
    <citation type="journal article" date="1987" name="Nucleic Acids Res.">
        <title>Sequence of the mouse glandular kallikrein gene, mGK-5.</title>
        <authorList>
            <person name="Drinkwater C.C."/>
            <person name="Richards R.I."/>
        </authorList>
    </citation>
    <scope>NUCLEOTIDE SEQUENCE [GENOMIC DNA]</scope>
    <source>
        <strain>BALB/cJ</strain>
        <tissue>Liver</tissue>
    </source>
</reference>
<reference key="2">
    <citation type="journal article" date="2004" name="Genome Res.">
        <title>The status, quality, and expansion of the NIH full-length cDNA project: the Mammalian Gene Collection (MGC).</title>
        <authorList>
            <consortium name="The MGC Project Team"/>
        </authorList>
    </citation>
    <scope>NUCLEOTIDE SEQUENCE [LARGE SCALE MRNA]</scope>
    <source>
        <strain>FVB/N</strain>
        <tissue>Salivary gland</tissue>
    </source>
</reference>
<reference key="3">
    <citation type="journal article" date="1987" name="J. Biol. Chem.">
        <title>Mouse glandular kallikrein genes. Structure and partial sequence analysis of the kallikrein gene locus.</title>
        <authorList>
            <person name="Evans B.A."/>
            <person name="Drinkwater C.C."/>
            <person name="Richards R.I."/>
        </authorList>
    </citation>
    <scope>NUCLEOTIDE SEQUENCE [GENOMIC DNA] OF 17-54 AND 70-122</scope>
    <source>
        <strain>BALB/cJ</strain>
    </source>
</reference>
<gene>
    <name type="primary">Klk1b5</name>
    <name type="synonym">Klk-5</name>
    <name type="synonym">Klk5</name>
</gene>
<comment type="function">
    <text>Glandular kallikreins cleave Met-Lys and Arg-Ser bonds in kininogen to release Lys-bradykinin.</text>
</comment>
<comment type="catalytic activity">
    <reaction>
        <text>Preferential cleavage of Arg-|-Xaa bonds in small molecule substrates. Highly selective action to release kallidin (lysyl-bradykinin) from kininogen involves hydrolysis of Met-|-Xaa or Leu-|-Xaa.</text>
        <dbReference type="EC" id="3.4.21.35"/>
    </reaction>
</comment>
<comment type="similarity">
    <text evidence="1">Belongs to the peptidase S1 family. Kallikrein subfamily.</text>
</comment>
<organism>
    <name type="scientific">Mus musculus</name>
    <name type="common">Mouse</name>
    <dbReference type="NCBI Taxonomy" id="10090"/>
    <lineage>
        <taxon>Eukaryota</taxon>
        <taxon>Metazoa</taxon>
        <taxon>Chordata</taxon>
        <taxon>Craniata</taxon>
        <taxon>Vertebrata</taxon>
        <taxon>Euteleostomi</taxon>
        <taxon>Mammalia</taxon>
        <taxon>Eutheria</taxon>
        <taxon>Euarchontoglires</taxon>
        <taxon>Glires</taxon>
        <taxon>Rodentia</taxon>
        <taxon>Myomorpha</taxon>
        <taxon>Muroidea</taxon>
        <taxon>Muridae</taxon>
        <taxon>Murinae</taxon>
        <taxon>Mus</taxon>
        <taxon>Mus</taxon>
    </lineage>
</organism>
<proteinExistence type="evidence at transcript level"/>